<sequence>MEHYISLFVKSVFIENMALSFFLGMCTFLAVSKKVSTAFGLGIAVIVVLGISVPVNQLVYTHILKDGALIEGVDLSFLNFITFIGVIAALVQILEMFLDKFVPSLYEALGIFLPLITVNCAIFGGVSFMVQREYNFPESVVYGIGAGTGWMLAIVALAGLTEKMKYADVPAGLRGLGITFITVGLMALGFMSFSGIQL</sequence>
<accession>Q65VU8</accession>
<protein>
    <recommendedName>
        <fullName evidence="1">Na(+)-translocating NADH-quinone reductase subunit E</fullName>
        <shortName evidence="1">Na(+)-NQR subunit E</shortName>
        <shortName evidence="1">Na(+)-translocating NQR subunit E</shortName>
        <ecNumber evidence="1">7.2.1.1</ecNumber>
    </recommendedName>
    <alternativeName>
        <fullName evidence="1">NQR complex subunit E</fullName>
    </alternativeName>
    <alternativeName>
        <fullName evidence="1">NQR-1 subunit E</fullName>
    </alternativeName>
</protein>
<dbReference type="EC" id="7.2.1.1" evidence="1"/>
<dbReference type="EMBL" id="AE016827">
    <property type="protein sequence ID" value="AAU36912.1"/>
    <property type="molecule type" value="Genomic_DNA"/>
</dbReference>
<dbReference type="RefSeq" id="WP_011199487.1">
    <property type="nucleotide sequence ID" value="NC_006300.1"/>
</dbReference>
<dbReference type="SMR" id="Q65VU8"/>
<dbReference type="STRING" id="221988.MS0305"/>
<dbReference type="KEGG" id="msu:MS0305"/>
<dbReference type="eggNOG" id="COG2209">
    <property type="taxonomic scope" value="Bacteria"/>
</dbReference>
<dbReference type="HOGENOM" id="CLU_095255_0_0_6"/>
<dbReference type="OrthoDB" id="9803631at2"/>
<dbReference type="Proteomes" id="UP000000607">
    <property type="component" value="Chromosome"/>
</dbReference>
<dbReference type="GO" id="GO:0009276">
    <property type="term" value="C:Gram-negative-bacterium-type cell wall"/>
    <property type="evidence" value="ECO:0007669"/>
    <property type="project" value="InterPro"/>
</dbReference>
<dbReference type="GO" id="GO:0005886">
    <property type="term" value="C:plasma membrane"/>
    <property type="evidence" value="ECO:0007669"/>
    <property type="project" value="UniProtKB-SubCell"/>
</dbReference>
<dbReference type="GO" id="GO:0016655">
    <property type="term" value="F:oxidoreductase activity, acting on NAD(P)H, quinone or similar compound as acceptor"/>
    <property type="evidence" value="ECO:0007669"/>
    <property type="project" value="UniProtKB-UniRule"/>
</dbReference>
<dbReference type="GO" id="GO:0022904">
    <property type="term" value="P:respiratory electron transport chain"/>
    <property type="evidence" value="ECO:0007669"/>
    <property type="project" value="InterPro"/>
</dbReference>
<dbReference type="GO" id="GO:0006814">
    <property type="term" value="P:sodium ion transport"/>
    <property type="evidence" value="ECO:0007669"/>
    <property type="project" value="UniProtKB-UniRule"/>
</dbReference>
<dbReference type="HAMAP" id="MF_00429">
    <property type="entry name" value="NqrE"/>
    <property type="match status" value="1"/>
</dbReference>
<dbReference type="InterPro" id="IPR003667">
    <property type="entry name" value="NqrDE/RnfAE"/>
</dbReference>
<dbReference type="InterPro" id="IPR050133">
    <property type="entry name" value="NqrDE/RnfAE_oxidrdctase"/>
</dbReference>
<dbReference type="InterPro" id="IPR010967">
    <property type="entry name" value="NqrE"/>
</dbReference>
<dbReference type="NCBIfam" id="TIGR01940">
    <property type="entry name" value="nqrE"/>
    <property type="match status" value="1"/>
</dbReference>
<dbReference type="PANTHER" id="PTHR30335">
    <property type="entry name" value="INTEGRAL MEMBRANE PROTEIN OF SOXR-REDUCING COMPLEX"/>
    <property type="match status" value="1"/>
</dbReference>
<dbReference type="PANTHER" id="PTHR30335:SF1">
    <property type="entry name" value="NA(+)-TRANSLOCATING NADH-QUINONE REDUCTASE SUBUNIT E"/>
    <property type="match status" value="1"/>
</dbReference>
<dbReference type="Pfam" id="PF02508">
    <property type="entry name" value="Rnf-Nqr"/>
    <property type="match status" value="1"/>
</dbReference>
<dbReference type="PIRSF" id="PIRSF006102">
    <property type="entry name" value="NQR_DE"/>
    <property type="match status" value="1"/>
</dbReference>
<comment type="function">
    <text evidence="1">NQR complex catalyzes the reduction of ubiquinone-1 to ubiquinol by two successive reactions, coupled with the transport of Na(+) ions from the cytoplasm to the periplasm. NqrA to NqrE are probably involved in the second step, the conversion of ubisemiquinone to ubiquinol.</text>
</comment>
<comment type="catalytic activity">
    <reaction evidence="1">
        <text>a ubiquinone + n Na(+)(in) + NADH + H(+) = a ubiquinol + n Na(+)(out) + NAD(+)</text>
        <dbReference type="Rhea" id="RHEA:47748"/>
        <dbReference type="Rhea" id="RHEA-COMP:9565"/>
        <dbReference type="Rhea" id="RHEA-COMP:9566"/>
        <dbReference type="ChEBI" id="CHEBI:15378"/>
        <dbReference type="ChEBI" id="CHEBI:16389"/>
        <dbReference type="ChEBI" id="CHEBI:17976"/>
        <dbReference type="ChEBI" id="CHEBI:29101"/>
        <dbReference type="ChEBI" id="CHEBI:57540"/>
        <dbReference type="ChEBI" id="CHEBI:57945"/>
        <dbReference type="EC" id="7.2.1.1"/>
    </reaction>
</comment>
<comment type="subunit">
    <text evidence="1">Composed of six subunits; NqrA, NqrB, NqrC, NqrD, NqrE and NqrF.</text>
</comment>
<comment type="subcellular location">
    <subcellularLocation>
        <location evidence="1">Cell inner membrane</location>
        <topology evidence="1">Multi-pass membrane protein</topology>
    </subcellularLocation>
</comment>
<comment type="similarity">
    <text evidence="1">Belongs to the NqrDE/RnfAE family.</text>
</comment>
<feature type="chain" id="PRO_1000060198" description="Na(+)-translocating NADH-quinone reductase subunit E">
    <location>
        <begin position="1"/>
        <end position="198"/>
    </location>
</feature>
<feature type="transmembrane region" description="Helical" evidence="1">
    <location>
        <begin position="11"/>
        <end position="31"/>
    </location>
</feature>
<feature type="transmembrane region" description="Helical" evidence="1">
    <location>
        <begin position="35"/>
        <end position="55"/>
    </location>
</feature>
<feature type="transmembrane region" description="Helical" evidence="1">
    <location>
        <begin position="77"/>
        <end position="97"/>
    </location>
</feature>
<feature type="transmembrane region" description="Helical" evidence="1">
    <location>
        <begin position="110"/>
        <end position="130"/>
    </location>
</feature>
<feature type="transmembrane region" description="Helical" evidence="1">
    <location>
        <begin position="140"/>
        <end position="160"/>
    </location>
</feature>
<feature type="transmembrane region" description="Helical" evidence="1">
    <location>
        <begin position="176"/>
        <end position="196"/>
    </location>
</feature>
<organism>
    <name type="scientific">Mannheimia succiniciproducens (strain KCTC 0769BP / MBEL55E)</name>
    <dbReference type="NCBI Taxonomy" id="221988"/>
    <lineage>
        <taxon>Bacteria</taxon>
        <taxon>Pseudomonadati</taxon>
        <taxon>Pseudomonadota</taxon>
        <taxon>Gammaproteobacteria</taxon>
        <taxon>Pasteurellales</taxon>
        <taxon>Pasteurellaceae</taxon>
        <taxon>Basfia</taxon>
    </lineage>
</organism>
<reference key="1">
    <citation type="journal article" date="2004" name="Nat. Biotechnol.">
        <title>The genome sequence of the capnophilic rumen bacterium Mannheimia succiniciproducens.</title>
        <authorList>
            <person name="Hong S.H."/>
            <person name="Kim J.S."/>
            <person name="Lee S.Y."/>
            <person name="In Y.H."/>
            <person name="Choi S.S."/>
            <person name="Rih J.-K."/>
            <person name="Kim C.H."/>
            <person name="Jeong H."/>
            <person name="Hur C.G."/>
            <person name="Kim J.J."/>
        </authorList>
    </citation>
    <scope>NUCLEOTIDE SEQUENCE [LARGE SCALE GENOMIC DNA]</scope>
    <source>
        <strain>KCTC 0769BP / MBEL55E</strain>
    </source>
</reference>
<name>NQRE_MANSM</name>
<keyword id="KW-0997">Cell inner membrane</keyword>
<keyword id="KW-1003">Cell membrane</keyword>
<keyword id="KW-0406">Ion transport</keyword>
<keyword id="KW-0472">Membrane</keyword>
<keyword id="KW-0520">NAD</keyword>
<keyword id="KW-0915">Sodium</keyword>
<keyword id="KW-0739">Sodium transport</keyword>
<keyword id="KW-1278">Translocase</keyword>
<keyword id="KW-0812">Transmembrane</keyword>
<keyword id="KW-1133">Transmembrane helix</keyword>
<keyword id="KW-0813">Transport</keyword>
<keyword id="KW-0830">Ubiquinone</keyword>
<gene>
    <name evidence="1" type="primary">nqrE</name>
    <name type="ordered locus">MS0305</name>
</gene>
<proteinExistence type="inferred from homology"/>
<evidence type="ECO:0000255" key="1">
    <source>
        <dbReference type="HAMAP-Rule" id="MF_00429"/>
    </source>
</evidence>